<protein>
    <recommendedName>
        <fullName evidence="7">Sensory neuron membrane protein 2</fullName>
        <shortName evidence="5">SNMP2-Msex</shortName>
    </recommendedName>
</protein>
<evidence type="ECO:0000250" key="1">
    <source>
        <dbReference type="UniProtKB" id="O02351"/>
    </source>
</evidence>
<evidence type="ECO:0000250" key="2">
    <source>
        <dbReference type="UniProtKB" id="P26201"/>
    </source>
</evidence>
<evidence type="ECO:0000255" key="3"/>
<evidence type="ECO:0000269" key="4">
    <source>
    </source>
</evidence>
<evidence type="ECO:0000303" key="5">
    <source>
    </source>
</evidence>
<evidence type="ECO:0000305" key="6"/>
<evidence type="ECO:0000312" key="7">
    <source>
        <dbReference type="EMBL" id="AAG49365.1"/>
    </source>
</evidence>
<reference evidence="6 7" key="1">
    <citation type="journal article" date="2001" name="J. Neurobiol.">
        <title>Antennal SNMPs (sensory neuron membrane proteins) of Lepidoptera define a unique family of invertebrate CD36-like proteins.</title>
        <authorList>
            <person name="Rogers M.E."/>
            <person name="Krieger J."/>
            <person name="Vogt R.G."/>
        </authorList>
    </citation>
    <scope>NUCLEOTIDE SEQUENCE [MRNA]</scope>
    <scope>TISSUE SPECIFICITY</scope>
    <source>
        <tissue evidence="4">Antenna</tissue>
    </source>
</reference>
<comment type="function">
    <text evidence="1">Plays an olfactory role that is not restricted to pheromone sensitivity.</text>
</comment>
<comment type="subcellular location">
    <subcellularLocation>
        <location evidence="1">Cell membrane</location>
        <topology evidence="1">Multi-pass membrane protein</topology>
    </subcellularLocation>
</comment>
<comment type="tissue specificity">
    <text evidence="4">Localizes to both male and female antennae but not the leg, wing, gut, head or thoracic ganglia. Detected throughout the sensory epithelium, associating with both sex-pheromone sensilla and plant-volatile sensilla. Differentially expressed among different sensilla and different neurons within a given sensillum.</text>
</comment>
<comment type="similarity">
    <text evidence="3">Belongs to the CD36 family.</text>
</comment>
<proteinExistence type="evidence at transcript level"/>
<accession>Q9GPH8</accession>
<name>SNMP2_MANSE</name>
<dbReference type="EMBL" id="AF323588">
    <property type="protein sequence ID" value="AAG49365.1"/>
    <property type="molecule type" value="mRNA"/>
</dbReference>
<dbReference type="SMR" id="Q9GPH8"/>
<dbReference type="OrthoDB" id="195015at2759"/>
<dbReference type="GO" id="GO:0005737">
    <property type="term" value="C:cytoplasm"/>
    <property type="evidence" value="ECO:0007669"/>
    <property type="project" value="TreeGrafter"/>
</dbReference>
<dbReference type="GO" id="GO:0005886">
    <property type="term" value="C:plasma membrane"/>
    <property type="evidence" value="ECO:0007669"/>
    <property type="project" value="UniProtKB-SubCell"/>
</dbReference>
<dbReference type="GO" id="GO:0005044">
    <property type="term" value="F:scavenger receptor activity"/>
    <property type="evidence" value="ECO:0007669"/>
    <property type="project" value="TreeGrafter"/>
</dbReference>
<dbReference type="GO" id="GO:0007608">
    <property type="term" value="P:sensory perception of smell"/>
    <property type="evidence" value="ECO:0007669"/>
    <property type="project" value="UniProtKB-KW"/>
</dbReference>
<dbReference type="InterPro" id="IPR002159">
    <property type="entry name" value="CD36_fam"/>
</dbReference>
<dbReference type="PANTHER" id="PTHR11923">
    <property type="entry name" value="SCAVENGER RECEPTOR CLASS B TYPE-1 SR-B1"/>
    <property type="match status" value="1"/>
</dbReference>
<dbReference type="PANTHER" id="PTHR11923:SF109">
    <property type="entry name" value="SENSORY NEURON MEMBRANE PROTEIN 2"/>
    <property type="match status" value="1"/>
</dbReference>
<dbReference type="Pfam" id="PF01130">
    <property type="entry name" value="CD36"/>
    <property type="match status" value="1"/>
</dbReference>
<dbReference type="PRINTS" id="PR01609">
    <property type="entry name" value="CD36FAMILY"/>
</dbReference>
<sequence>MLAKHSKLFFTGSVVFLIVAIVLASWGFPKIISTRIQKSIQLENSSMMYDKWVKLPIPLIFKVYFFNVTNAEGINEGERPILQEIGPYVYKQYRERTVLGYGPNDTIKYMLKKNFVFDPEASNGLTEDDDVTVINFPYMAALLTIQQMMPSAVAMVNRALEQFFSNLTDPFMRVKVKDLLFDGVFLNCDGDSPALSLVCAKLKADSPPTMRPAEDGVNGYYFSMFSHLNRTETGPYEMVRGTEDVFALGNIVSYKEKKSVSAWGDEYCNRINGSDASIFPPIDENNVPERLYTFEPEICRSLYASLAGKATLFNISTYYYEISSSALASKSANPDNKCYCKKDWSASHDGCLLMGVFNLMPCQGAPAIASLPHFYLASEELLEYFEDGVKPDKEKHNTYVYIDPVTGVVLKGVKRLQFNIELRNMPRVPQLQAVPTGLFPMLWIEEGAVMTPDLQQELRDAHALLSYAQLARWIILAAAIILAIIATITVARSTSLISWPRNSNSVNFIIGPMVNDKMR</sequence>
<keyword id="KW-1003">Cell membrane</keyword>
<keyword id="KW-1015">Disulfide bond</keyword>
<keyword id="KW-0325">Glycoprotein</keyword>
<keyword id="KW-0472">Membrane</keyword>
<keyword id="KW-0552">Olfaction</keyword>
<keyword id="KW-0675">Receptor</keyword>
<keyword id="KW-0716">Sensory transduction</keyword>
<keyword id="KW-0812">Transmembrane</keyword>
<keyword id="KW-1133">Transmembrane helix</keyword>
<feature type="chain" id="PRO_0000413631" description="Sensory neuron membrane protein 2">
    <location>
        <begin position="1"/>
        <end position="519"/>
    </location>
</feature>
<feature type="topological domain" description="Cytoplasmic" evidence="3">
    <location>
        <begin position="1"/>
        <end position="7"/>
    </location>
</feature>
<feature type="transmembrane region" description="Helical" evidence="3">
    <location>
        <begin position="8"/>
        <end position="28"/>
    </location>
</feature>
<feature type="topological domain" description="Extracellular" evidence="3">
    <location>
        <begin position="29"/>
        <end position="469"/>
    </location>
</feature>
<feature type="transmembrane region" description="Helical" evidence="3">
    <location>
        <begin position="470"/>
        <end position="490"/>
    </location>
</feature>
<feature type="topological domain" description="Cytoplasmic" evidence="3">
    <location>
        <begin position="491"/>
        <end position="519"/>
    </location>
</feature>
<feature type="glycosylation site" description="N-linked (GlcNAc...) asparagine" evidence="3">
    <location>
        <position position="44"/>
    </location>
</feature>
<feature type="glycosylation site" description="N-linked (GlcNAc...) asparagine" evidence="3">
    <location>
        <position position="67"/>
    </location>
</feature>
<feature type="glycosylation site" description="N-linked (GlcNAc...) asparagine" evidence="3">
    <location>
        <position position="104"/>
    </location>
</feature>
<feature type="glycosylation site" description="N-linked (GlcNAc...) asparagine" evidence="3">
    <location>
        <position position="166"/>
    </location>
</feature>
<feature type="glycosylation site" description="N-linked (GlcNAc...) asparagine" evidence="3">
    <location>
        <position position="229"/>
    </location>
</feature>
<feature type="glycosylation site" description="N-linked (GlcNAc...) asparagine" evidence="3">
    <location>
        <position position="272"/>
    </location>
</feature>
<feature type="glycosylation site" description="N-linked (GlcNAc...) asparagine" evidence="3">
    <location>
        <position position="314"/>
    </location>
</feature>
<feature type="disulfide bond" evidence="2">
    <location>
        <begin position="268"/>
        <end position="338"/>
    </location>
</feature>
<feature type="disulfide bond" evidence="2">
    <location>
        <begin position="299"/>
        <end position="362"/>
    </location>
</feature>
<feature type="disulfide bond" evidence="2">
    <location>
        <begin position="340"/>
        <end position="351"/>
    </location>
</feature>
<organism>
    <name type="scientific">Manduca sexta</name>
    <name type="common">Tobacco hawkmoth</name>
    <name type="synonym">Tobacco hornworm</name>
    <dbReference type="NCBI Taxonomy" id="7130"/>
    <lineage>
        <taxon>Eukaryota</taxon>
        <taxon>Metazoa</taxon>
        <taxon>Ecdysozoa</taxon>
        <taxon>Arthropoda</taxon>
        <taxon>Hexapoda</taxon>
        <taxon>Insecta</taxon>
        <taxon>Pterygota</taxon>
        <taxon>Neoptera</taxon>
        <taxon>Endopterygota</taxon>
        <taxon>Lepidoptera</taxon>
        <taxon>Glossata</taxon>
        <taxon>Ditrysia</taxon>
        <taxon>Bombycoidea</taxon>
        <taxon>Sphingidae</taxon>
        <taxon>Sphinginae</taxon>
        <taxon>Sphingini</taxon>
        <taxon>Manduca</taxon>
    </lineage>
</organism>